<name>CYSA_CAUVC</name>
<feature type="chain" id="PRO_0000092262" description="Sulfate/thiosulfate import ATP-binding protein CysA">
    <location>
        <begin position="1"/>
        <end position="339"/>
    </location>
</feature>
<feature type="domain" description="ABC transporter" evidence="1">
    <location>
        <begin position="3"/>
        <end position="237"/>
    </location>
</feature>
<feature type="binding site" evidence="1">
    <location>
        <begin position="35"/>
        <end position="42"/>
    </location>
    <ligand>
        <name>ATP</name>
        <dbReference type="ChEBI" id="CHEBI:30616"/>
    </ligand>
</feature>
<organism>
    <name type="scientific">Caulobacter vibrioides (strain ATCC 19089 / CIP 103742 / CB 15)</name>
    <name type="common">Caulobacter crescentus</name>
    <dbReference type="NCBI Taxonomy" id="190650"/>
    <lineage>
        <taxon>Bacteria</taxon>
        <taxon>Pseudomonadati</taxon>
        <taxon>Pseudomonadota</taxon>
        <taxon>Alphaproteobacteria</taxon>
        <taxon>Caulobacterales</taxon>
        <taxon>Caulobacteraceae</taxon>
        <taxon>Caulobacter</taxon>
    </lineage>
</organism>
<sequence length="339" mass="36452">MTIAIRSVEKQFGRYPALNKVDLEIADGELLALLGPSGSGKTTLLRTIAGLEFPDAGQVLFDGQDVTYASAAARRVGFVFQQYALFKHMTVAKNIAFGLDVRKGKDKPSKAEIARRVEELLKLVELEGLGGRYPSQLSGGQRQRVALSRALAVQPSVLLLDEPFGALDATVRKSLRRELRRVHDATGVTTIFVTHDQEEALELADRVAILNNGRIEQIGTPDQVHDAPETAFVCGFVGEANRFDGQVSGGRFKAGALTVPASALKDGAATAYVRPHDFALDEAGFEVLIERAQVQGALTAVTALTSDGRRLEISASRADADRFTGAVKIVARKAHVYAA</sequence>
<accession>Q9A7X1</accession>
<protein>
    <recommendedName>
        <fullName evidence="1">Sulfate/thiosulfate import ATP-binding protein CysA</fullName>
        <ecNumber evidence="1">7.3.2.3</ecNumber>
    </recommendedName>
    <alternativeName>
        <fullName evidence="1">Sulfate-transporting ATPase</fullName>
    </alternativeName>
</protein>
<evidence type="ECO:0000255" key="1">
    <source>
        <dbReference type="HAMAP-Rule" id="MF_01701"/>
    </source>
</evidence>
<evidence type="ECO:0000305" key="2"/>
<gene>
    <name evidence="1" type="primary">cysA</name>
    <name type="ordered locus">CC_1598</name>
</gene>
<dbReference type="EC" id="7.3.2.3" evidence="1"/>
<dbReference type="EMBL" id="AE005673">
    <property type="protein sequence ID" value="AAK23577.1"/>
    <property type="status" value="ALT_INIT"/>
    <property type="molecule type" value="Genomic_DNA"/>
</dbReference>
<dbReference type="PIR" id="E87447">
    <property type="entry name" value="E87447"/>
</dbReference>
<dbReference type="RefSeq" id="NP_420409.1">
    <property type="nucleotide sequence ID" value="NC_002696.2"/>
</dbReference>
<dbReference type="RefSeq" id="WP_012640283.1">
    <property type="nucleotide sequence ID" value="NC_002696.2"/>
</dbReference>
<dbReference type="SMR" id="Q9A7X1"/>
<dbReference type="STRING" id="190650.CC_1598"/>
<dbReference type="EnsemblBacteria" id="AAK23577">
    <property type="protein sequence ID" value="AAK23577"/>
    <property type="gene ID" value="CC_1598"/>
</dbReference>
<dbReference type="KEGG" id="ccr:CC_1598"/>
<dbReference type="PATRIC" id="fig|190650.5.peg.1625"/>
<dbReference type="eggNOG" id="COG1118">
    <property type="taxonomic scope" value="Bacteria"/>
</dbReference>
<dbReference type="HOGENOM" id="CLU_000604_1_1_5"/>
<dbReference type="Proteomes" id="UP000001816">
    <property type="component" value="Chromosome"/>
</dbReference>
<dbReference type="GO" id="GO:0043190">
    <property type="term" value="C:ATP-binding cassette (ABC) transporter complex"/>
    <property type="evidence" value="ECO:0007669"/>
    <property type="project" value="InterPro"/>
</dbReference>
<dbReference type="GO" id="GO:0015419">
    <property type="term" value="F:ABC-type sulfate transporter activity"/>
    <property type="evidence" value="ECO:0007669"/>
    <property type="project" value="InterPro"/>
</dbReference>
<dbReference type="GO" id="GO:0102025">
    <property type="term" value="F:ABC-type thiosulfate transporter activity"/>
    <property type="evidence" value="ECO:0007669"/>
    <property type="project" value="RHEA"/>
</dbReference>
<dbReference type="GO" id="GO:0005524">
    <property type="term" value="F:ATP binding"/>
    <property type="evidence" value="ECO:0007669"/>
    <property type="project" value="UniProtKB-KW"/>
</dbReference>
<dbReference type="GO" id="GO:0016887">
    <property type="term" value="F:ATP hydrolysis activity"/>
    <property type="evidence" value="ECO:0007669"/>
    <property type="project" value="InterPro"/>
</dbReference>
<dbReference type="FunFam" id="3.40.50.300:FF:000425">
    <property type="entry name" value="Probable ABC transporter, ATP-binding subunit"/>
    <property type="match status" value="1"/>
</dbReference>
<dbReference type="Gene3D" id="3.40.50.300">
    <property type="entry name" value="P-loop containing nucleotide triphosphate hydrolases"/>
    <property type="match status" value="1"/>
</dbReference>
<dbReference type="InterPro" id="IPR003593">
    <property type="entry name" value="AAA+_ATPase"/>
</dbReference>
<dbReference type="InterPro" id="IPR050093">
    <property type="entry name" value="ABC_SmlMolc_Importer"/>
</dbReference>
<dbReference type="InterPro" id="IPR003439">
    <property type="entry name" value="ABC_transporter-like_ATP-bd"/>
</dbReference>
<dbReference type="InterPro" id="IPR017871">
    <property type="entry name" value="ABC_transporter-like_CS"/>
</dbReference>
<dbReference type="InterPro" id="IPR041193">
    <property type="entry name" value="CysA_C"/>
</dbReference>
<dbReference type="InterPro" id="IPR008995">
    <property type="entry name" value="Mo/tungstate-bd_C_term_dom"/>
</dbReference>
<dbReference type="InterPro" id="IPR027417">
    <property type="entry name" value="P-loop_NTPase"/>
</dbReference>
<dbReference type="InterPro" id="IPR005666">
    <property type="entry name" value="Sulph_transpt1"/>
</dbReference>
<dbReference type="NCBIfam" id="TIGR00968">
    <property type="entry name" value="3a0106s01"/>
    <property type="match status" value="1"/>
</dbReference>
<dbReference type="PANTHER" id="PTHR42781">
    <property type="entry name" value="SPERMIDINE/PUTRESCINE IMPORT ATP-BINDING PROTEIN POTA"/>
    <property type="match status" value="1"/>
</dbReference>
<dbReference type="PANTHER" id="PTHR42781:SF4">
    <property type="entry name" value="SPERMIDINE_PUTRESCINE IMPORT ATP-BINDING PROTEIN POTA"/>
    <property type="match status" value="1"/>
</dbReference>
<dbReference type="Pfam" id="PF00005">
    <property type="entry name" value="ABC_tran"/>
    <property type="match status" value="1"/>
</dbReference>
<dbReference type="Pfam" id="PF17850">
    <property type="entry name" value="CysA_C_terminal"/>
    <property type="match status" value="1"/>
</dbReference>
<dbReference type="SMART" id="SM00382">
    <property type="entry name" value="AAA"/>
    <property type="match status" value="1"/>
</dbReference>
<dbReference type="SUPFAM" id="SSF50331">
    <property type="entry name" value="MOP-like"/>
    <property type="match status" value="1"/>
</dbReference>
<dbReference type="SUPFAM" id="SSF52540">
    <property type="entry name" value="P-loop containing nucleoside triphosphate hydrolases"/>
    <property type="match status" value="1"/>
</dbReference>
<dbReference type="PROSITE" id="PS00211">
    <property type="entry name" value="ABC_TRANSPORTER_1"/>
    <property type="match status" value="1"/>
</dbReference>
<dbReference type="PROSITE" id="PS50893">
    <property type="entry name" value="ABC_TRANSPORTER_2"/>
    <property type="match status" value="1"/>
</dbReference>
<dbReference type="PROSITE" id="PS51237">
    <property type="entry name" value="CYSA"/>
    <property type="match status" value="1"/>
</dbReference>
<comment type="function">
    <text evidence="1">Part of the ABC transporter complex CysAWTP involved in sulfate/thiosulfate import. Responsible for energy coupling to the transport system.</text>
</comment>
<comment type="catalytic activity">
    <reaction evidence="1">
        <text>sulfate(out) + ATP + H2O = sulfate(in) + ADP + phosphate + H(+)</text>
        <dbReference type="Rhea" id="RHEA:10192"/>
        <dbReference type="ChEBI" id="CHEBI:15377"/>
        <dbReference type="ChEBI" id="CHEBI:15378"/>
        <dbReference type="ChEBI" id="CHEBI:16189"/>
        <dbReference type="ChEBI" id="CHEBI:30616"/>
        <dbReference type="ChEBI" id="CHEBI:43474"/>
        <dbReference type="ChEBI" id="CHEBI:456216"/>
        <dbReference type="EC" id="7.3.2.3"/>
    </reaction>
</comment>
<comment type="catalytic activity">
    <reaction evidence="1">
        <text>thiosulfate(out) + ATP + H2O = thiosulfate(in) + ADP + phosphate + H(+)</text>
        <dbReference type="Rhea" id="RHEA:29871"/>
        <dbReference type="ChEBI" id="CHEBI:15377"/>
        <dbReference type="ChEBI" id="CHEBI:15378"/>
        <dbReference type="ChEBI" id="CHEBI:30616"/>
        <dbReference type="ChEBI" id="CHEBI:33542"/>
        <dbReference type="ChEBI" id="CHEBI:43474"/>
        <dbReference type="ChEBI" id="CHEBI:456216"/>
        <dbReference type="EC" id="7.3.2.3"/>
    </reaction>
</comment>
<comment type="subunit">
    <text evidence="1">The complex is composed of two ATP-binding proteins (CysA), two transmembrane proteins (CysT and CysW) and a solute-binding protein (CysP).</text>
</comment>
<comment type="subcellular location">
    <subcellularLocation>
        <location evidence="1">Cell inner membrane</location>
        <topology evidence="1">Peripheral membrane protein</topology>
    </subcellularLocation>
</comment>
<comment type="similarity">
    <text evidence="1">Belongs to the ABC transporter superfamily. Sulfate/tungstate importer (TC 3.A.1.6) family.</text>
</comment>
<comment type="sequence caution" evidence="2">
    <conflict type="erroneous initiation">
        <sequence resource="EMBL-CDS" id="AAK23577"/>
    </conflict>
</comment>
<keyword id="KW-0067">ATP-binding</keyword>
<keyword id="KW-0997">Cell inner membrane</keyword>
<keyword id="KW-1003">Cell membrane</keyword>
<keyword id="KW-0472">Membrane</keyword>
<keyword id="KW-0547">Nucleotide-binding</keyword>
<keyword id="KW-1185">Reference proteome</keyword>
<keyword id="KW-0764">Sulfate transport</keyword>
<keyword id="KW-1278">Translocase</keyword>
<keyword id="KW-0813">Transport</keyword>
<proteinExistence type="inferred from homology"/>
<reference key="1">
    <citation type="journal article" date="2001" name="Proc. Natl. Acad. Sci. U.S.A.">
        <title>Complete genome sequence of Caulobacter crescentus.</title>
        <authorList>
            <person name="Nierman W.C."/>
            <person name="Feldblyum T.V."/>
            <person name="Laub M.T."/>
            <person name="Paulsen I.T."/>
            <person name="Nelson K.E."/>
            <person name="Eisen J.A."/>
            <person name="Heidelberg J.F."/>
            <person name="Alley M.R.K."/>
            <person name="Ohta N."/>
            <person name="Maddock J.R."/>
            <person name="Potocka I."/>
            <person name="Nelson W.C."/>
            <person name="Newton A."/>
            <person name="Stephens C."/>
            <person name="Phadke N.D."/>
            <person name="Ely B."/>
            <person name="DeBoy R.T."/>
            <person name="Dodson R.J."/>
            <person name="Durkin A.S."/>
            <person name="Gwinn M.L."/>
            <person name="Haft D.H."/>
            <person name="Kolonay J.F."/>
            <person name="Smit J."/>
            <person name="Craven M.B."/>
            <person name="Khouri H.M."/>
            <person name="Shetty J."/>
            <person name="Berry K.J."/>
            <person name="Utterback T.R."/>
            <person name="Tran K."/>
            <person name="Wolf A.M."/>
            <person name="Vamathevan J.J."/>
            <person name="Ermolaeva M.D."/>
            <person name="White O."/>
            <person name="Salzberg S.L."/>
            <person name="Venter J.C."/>
            <person name="Shapiro L."/>
            <person name="Fraser C.M."/>
        </authorList>
    </citation>
    <scope>NUCLEOTIDE SEQUENCE [LARGE SCALE GENOMIC DNA]</scope>
    <source>
        <strain>ATCC 19089 / CIP 103742 / CB 15</strain>
    </source>
</reference>